<feature type="chain" id="PRO_0000368598" description="ATP synthase subunit b">
    <location>
        <begin position="1"/>
        <end position="177"/>
    </location>
</feature>
<feature type="transmembrane region" description="Helical" evidence="1">
    <location>
        <begin position="29"/>
        <end position="49"/>
    </location>
</feature>
<organism>
    <name type="scientific">Mycolicibacterium paratuberculosis (strain ATCC BAA-968 / K-10)</name>
    <name type="common">Mycobacterium paratuberculosis</name>
    <dbReference type="NCBI Taxonomy" id="262316"/>
    <lineage>
        <taxon>Bacteria</taxon>
        <taxon>Bacillati</taxon>
        <taxon>Actinomycetota</taxon>
        <taxon>Actinomycetes</taxon>
        <taxon>Mycobacteriales</taxon>
        <taxon>Mycobacteriaceae</taxon>
        <taxon>Mycobacterium</taxon>
        <taxon>Mycobacterium avium complex (MAC)</taxon>
    </lineage>
</organism>
<proteinExistence type="inferred from homology"/>
<protein>
    <recommendedName>
        <fullName evidence="1">ATP synthase subunit b</fullName>
    </recommendedName>
    <alternativeName>
        <fullName evidence="1">ATP synthase F(0) sector subunit b</fullName>
    </alternativeName>
    <alternativeName>
        <fullName evidence="1">ATPase subunit I</fullName>
    </alternativeName>
    <alternativeName>
        <fullName evidence="1">F-type ATPase subunit b</fullName>
        <shortName evidence="1">F-ATPase subunit b</shortName>
    </alternativeName>
</protein>
<reference key="1">
    <citation type="journal article" date="2005" name="Proc. Natl. Acad. Sci. U.S.A.">
        <title>The complete genome sequence of Mycobacterium avium subspecies paratuberculosis.</title>
        <authorList>
            <person name="Li L."/>
            <person name="Bannantine J.P."/>
            <person name="Zhang Q."/>
            <person name="Amonsin A."/>
            <person name="May B.J."/>
            <person name="Alt D."/>
            <person name="Banerji N."/>
            <person name="Kanjilal S."/>
            <person name="Kapur V."/>
        </authorList>
    </citation>
    <scope>NUCLEOTIDE SEQUENCE [LARGE SCALE GENOMIC DNA]</scope>
    <source>
        <strain>ATCC BAA-968 / K-10</strain>
    </source>
</reference>
<evidence type="ECO:0000255" key="1">
    <source>
        <dbReference type="HAMAP-Rule" id="MF_01398"/>
    </source>
</evidence>
<name>ATPF_MYCPA</name>
<comment type="function">
    <text evidence="1">F(1)F(0) ATP synthase produces ATP from ADP in the presence of a proton or sodium gradient. F-type ATPases consist of two structural domains, F(1) containing the extramembraneous catalytic core and F(0) containing the membrane proton channel, linked together by a central stalk and a peripheral stalk. During catalysis, ATP synthesis in the catalytic domain of F(1) is coupled via a rotary mechanism of the central stalk subunits to proton translocation.</text>
</comment>
<comment type="function">
    <text evidence="1">Component of the F(0) channel, it forms part of the peripheral stalk, linking F(1) to F(0).</text>
</comment>
<comment type="subunit">
    <text evidence="1">F-type ATPases have 2 components, F(1) - the catalytic core - and F(0) - the membrane proton channel. F(1) has five subunits: alpha(3), beta(3), gamma(1), delta(1), epsilon(1). F(0) has three main subunits: a(1), b(2) and c(10-14). The alpha and beta chains form an alternating ring which encloses part of the gamma chain. F(1) is attached to F(0) by a central stalk formed by the gamma and epsilon chains, while a peripheral stalk is formed by the delta and b chains.</text>
</comment>
<comment type="subcellular location">
    <subcellularLocation>
        <location evidence="1">Cell membrane</location>
        <topology evidence="1">Single-pass membrane protein</topology>
    </subcellularLocation>
</comment>
<comment type="similarity">
    <text evidence="1">Belongs to the ATPase B chain family.</text>
</comment>
<keyword id="KW-0066">ATP synthesis</keyword>
<keyword id="KW-1003">Cell membrane</keyword>
<keyword id="KW-0138">CF(0)</keyword>
<keyword id="KW-0375">Hydrogen ion transport</keyword>
<keyword id="KW-0406">Ion transport</keyword>
<keyword id="KW-0472">Membrane</keyword>
<keyword id="KW-1185">Reference proteome</keyword>
<keyword id="KW-0812">Transmembrane</keyword>
<keyword id="KW-1133">Transmembrane helix</keyword>
<keyword id="KW-0813">Transport</keyword>
<sequence>MGDASLSVLASSQVVAEGGNNFLVPNGTFFFVLAIFLIVLAVIGTFVVPPVMKVLRERDAMVAKTAADNRKAAEQFEAAQADYEEAMTEARVQASSLRDNARAEGRKVVEDARAKAEQEVLSTLQLAARQLKRERDAVELDLRANVASMSATLASRILGVDVAPAAATTSATKTSGR</sequence>
<gene>
    <name evidence="1" type="primary">atpF</name>
    <name type="ordered locus">MAP_2455c</name>
</gene>
<accession>Q73X55</accession>
<dbReference type="EMBL" id="AE016958">
    <property type="protein sequence ID" value="AAS04772.1"/>
    <property type="molecule type" value="Genomic_DNA"/>
</dbReference>
<dbReference type="RefSeq" id="WP_003873224.1">
    <property type="nucleotide sequence ID" value="NZ_CP106873.1"/>
</dbReference>
<dbReference type="SMR" id="Q73X55"/>
<dbReference type="STRING" id="262316.MAP_2455c"/>
<dbReference type="KEGG" id="mpa:MAP_2455c"/>
<dbReference type="eggNOG" id="COG0711">
    <property type="taxonomic scope" value="Bacteria"/>
</dbReference>
<dbReference type="HOGENOM" id="CLU_079215_5_2_11"/>
<dbReference type="Proteomes" id="UP000000580">
    <property type="component" value="Chromosome"/>
</dbReference>
<dbReference type="GO" id="GO:0005886">
    <property type="term" value="C:plasma membrane"/>
    <property type="evidence" value="ECO:0007669"/>
    <property type="project" value="UniProtKB-SubCell"/>
</dbReference>
<dbReference type="GO" id="GO:0045259">
    <property type="term" value="C:proton-transporting ATP synthase complex"/>
    <property type="evidence" value="ECO:0007669"/>
    <property type="project" value="UniProtKB-KW"/>
</dbReference>
<dbReference type="GO" id="GO:0046933">
    <property type="term" value="F:proton-transporting ATP synthase activity, rotational mechanism"/>
    <property type="evidence" value="ECO:0007669"/>
    <property type="project" value="UniProtKB-UniRule"/>
</dbReference>
<dbReference type="GO" id="GO:0046961">
    <property type="term" value="F:proton-transporting ATPase activity, rotational mechanism"/>
    <property type="evidence" value="ECO:0007669"/>
    <property type="project" value="TreeGrafter"/>
</dbReference>
<dbReference type="CDD" id="cd06503">
    <property type="entry name" value="ATP-synt_Fo_b"/>
    <property type="match status" value="1"/>
</dbReference>
<dbReference type="HAMAP" id="MF_01398">
    <property type="entry name" value="ATP_synth_b_bprime"/>
    <property type="match status" value="1"/>
</dbReference>
<dbReference type="InterPro" id="IPR028987">
    <property type="entry name" value="ATP_synth_B-like_membr_sf"/>
</dbReference>
<dbReference type="InterPro" id="IPR002146">
    <property type="entry name" value="ATP_synth_b/b'su_bac/chlpt"/>
</dbReference>
<dbReference type="InterPro" id="IPR050059">
    <property type="entry name" value="ATP_synthase_B_chain"/>
</dbReference>
<dbReference type="NCBIfam" id="NF004412">
    <property type="entry name" value="PRK05759.1-3"/>
    <property type="match status" value="1"/>
</dbReference>
<dbReference type="PANTHER" id="PTHR33445:SF1">
    <property type="entry name" value="ATP SYNTHASE SUBUNIT B"/>
    <property type="match status" value="1"/>
</dbReference>
<dbReference type="PANTHER" id="PTHR33445">
    <property type="entry name" value="ATP SYNTHASE SUBUNIT B', CHLOROPLASTIC"/>
    <property type="match status" value="1"/>
</dbReference>
<dbReference type="Pfam" id="PF00430">
    <property type="entry name" value="ATP-synt_B"/>
    <property type="match status" value="1"/>
</dbReference>
<dbReference type="SUPFAM" id="SSF81573">
    <property type="entry name" value="F1F0 ATP synthase subunit B, membrane domain"/>
    <property type="match status" value="1"/>
</dbReference>